<sequence>MRHRKSGRQLNRNSSHRQAMFRNMAGSLVRHEIIKTTLPKAKELRRVVEPLITLAKTDNVANRRLAFARTRDNEIVAKLFNELGPRFASRAGGYTRILKCGFRAGDNAPMAYIELVDRAASQAEVVAAE</sequence>
<evidence type="ECO:0000255" key="1">
    <source>
        <dbReference type="HAMAP-Rule" id="MF_01368"/>
    </source>
</evidence>
<evidence type="ECO:0000305" key="2"/>
<protein>
    <recommendedName>
        <fullName evidence="1">Large ribosomal subunit protein bL17</fullName>
    </recommendedName>
    <alternativeName>
        <fullName evidence="2">50S ribosomal protein L17</fullName>
    </alternativeName>
</protein>
<feature type="chain" id="PRO_0000267975" description="Large ribosomal subunit protein bL17">
    <location>
        <begin position="1"/>
        <end position="129"/>
    </location>
</feature>
<dbReference type="EMBL" id="CP000305">
    <property type="protein sequence ID" value="ABG20161.1"/>
    <property type="molecule type" value="Genomic_DNA"/>
</dbReference>
<dbReference type="EMBL" id="ACNQ01000019">
    <property type="protein sequence ID" value="EEO74748.1"/>
    <property type="molecule type" value="Genomic_DNA"/>
</dbReference>
<dbReference type="RefSeq" id="WP_002209014.1">
    <property type="nucleotide sequence ID" value="NZ_ACNQ01000019.1"/>
</dbReference>
<dbReference type="SMR" id="Q1CCW9"/>
<dbReference type="GeneID" id="57974369"/>
<dbReference type="KEGG" id="ypn:YPN_3834"/>
<dbReference type="HOGENOM" id="CLU_074407_2_0_6"/>
<dbReference type="Proteomes" id="UP000008936">
    <property type="component" value="Chromosome"/>
</dbReference>
<dbReference type="GO" id="GO:0022625">
    <property type="term" value="C:cytosolic large ribosomal subunit"/>
    <property type="evidence" value="ECO:0007669"/>
    <property type="project" value="TreeGrafter"/>
</dbReference>
<dbReference type="GO" id="GO:0003735">
    <property type="term" value="F:structural constituent of ribosome"/>
    <property type="evidence" value="ECO:0007669"/>
    <property type="project" value="InterPro"/>
</dbReference>
<dbReference type="GO" id="GO:0006412">
    <property type="term" value="P:translation"/>
    <property type="evidence" value="ECO:0007669"/>
    <property type="project" value="UniProtKB-UniRule"/>
</dbReference>
<dbReference type="FunFam" id="3.90.1030.10:FF:000001">
    <property type="entry name" value="50S ribosomal protein L17"/>
    <property type="match status" value="1"/>
</dbReference>
<dbReference type="Gene3D" id="3.90.1030.10">
    <property type="entry name" value="Ribosomal protein L17"/>
    <property type="match status" value="1"/>
</dbReference>
<dbReference type="HAMAP" id="MF_01368">
    <property type="entry name" value="Ribosomal_bL17"/>
    <property type="match status" value="1"/>
</dbReference>
<dbReference type="InterPro" id="IPR000456">
    <property type="entry name" value="Ribosomal_bL17"/>
</dbReference>
<dbReference type="InterPro" id="IPR047859">
    <property type="entry name" value="Ribosomal_bL17_CS"/>
</dbReference>
<dbReference type="InterPro" id="IPR036373">
    <property type="entry name" value="Ribosomal_bL17_sf"/>
</dbReference>
<dbReference type="NCBIfam" id="TIGR00059">
    <property type="entry name" value="L17"/>
    <property type="match status" value="1"/>
</dbReference>
<dbReference type="PANTHER" id="PTHR14413:SF16">
    <property type="entry name" value="LARGE RIBOSOMAL SUBUNIT PROTEIN BL17M"/>
    <property type="match status" value="1"/>
</dbReference>
<dbReference type="PANTHER" id="PTHR14413">
    <property type="entry name" value="RIBOSOMAL PROTEIN L17"/>
    <property type="match status" value="1"/>
</dbReference>
<dbReference type="Pfam" id="PF01196">
    <property type="entry name" value="Ribosomal_L17"/>
    <property type="match status" value="1"/>
</dbReference>
<dbReference type="SUPFAM" id="SSF64263">
    <property type="entry name" value="Prokaryotic ribosomal protein L17"/>
    <property type="match status" value="1"/>
</dbReference>
<dbReference type="PROSITE" id="PS01167">
    <property type="entry name" value="RIBOSOMAL_L17"/>
    <property type="match status" value="1"/>
</dbReference>
<gene>
    <name evidence="1" type="primary">rplQ</name>
    <name type="ordered locus">YPN_3834</name>
    <name type="ORF">YP516_4356</name>
</gene>
<organism>
    <name type="scientific">Yersinia pestis bv. Antiqua (strain Nepal516)</name>
    <dbReference type="NCBI Taxonomy" id="377628"/>
    <lineage>
        <taxon>Bacteria</taxon>
        <taxon>Pseudomonadati</taxon>
        <taxon>Pseudomonadota</taxon>
        <taxon>Gammaproteobacteria</taxon>
        <taxon>Enterobacterales</taxon>
        <taxon>Yersiniaceae</taxon>
        <taxon>Yersinia</taxon>
    </lineage>
</organism>
<proteinExistence type="inferred from homology"/>
<reference key="1">
    <citation type="journal article" date="2006" name="J. Bacteriol.">
        <title>Complete genome sequence of Yersinia pestis strains Antiqua and Nepal516: evidence of gene reduction in an emerging pathogen.</title>
        <authorList>
            <person name="Chain P.S.G."/>
            <person name="Hu P."/>
            <person name="Malfatti S.A."/>
            <person name="Radnedge L."/>
            <person name="Larimer F."/>
            <person name="Vergez L.M."/>
            <person name="Worsham P."/>
            <person name="Chu M.C."/>
            <person name="Andersen G.L."/>
        </authorList>
    </citation>
    <scope>NUCLEOTIDE SEQUENCE [LARGE SCALE GENOMIC DNA]</scope>
    <source>
        <strain>Nepal516</strain>
    </source>
</reference>
<reference key="2">
    <citation type="submission" date="2009-04" db="EMBL/GenBank/DDBJ databases">
        <title>Yersinia pestis Nepal516A whole genome shotgun sequencing project.</title>
        <authorList>
            <person name="Plunkett G. III"/>
            <person name="Anderson B.D."/>
            <person name="Baumler D.J."/>
            <person name="Burland V."/>
            <person name="Cabot E.L."/>
            <person name="Glasner J.D."/>
            <person name="Mau B."/>
            <person name="Neeno-Eckwall E."/>
            <person name="Perna N.T."/>
            <person name="Munk A.C."/>
            <person name="Tapia R."/>
            <person name="Green L.D."/>
            <person name="Rogers Y.C."/>
            <person name="Detter J.C."/>
            <person name="Bruce D.C."/>
            <person name="Brettin T.S."/>
        </authorList>
    </citation>
    <scope>NUCLEOTIDE SEQUENCE [LARGE SCALE GENOMIC DNA]</scope>
    <source>
        <strain>Nepal516</strain>
    </source>
</reference>
<comment type="subunit">
    <text evidence="1">Part of the 50S ribosomal subunit. Contacts protein L32.</text>
</comment>
<comment type="similarity">
    <text evidence="1">Belongs to the bacterial ribosomal protein bL17 family.</text>
</comment>
<accession>Q1CCW9</accession>
<accession>D1Q2J5</accession>
<keyword id="KW-0687">Ribonucleoprotein</keyword>
<keyword id="KW-0689">Ribosomal protein</keyword>
<name>RL17_YERPN</name>